<reference key="1">
    <citation type="journal article" date="2010" name="Appl. Environ. Microbiol.">
        <title>The genome sequence of Psychrobacter arcticus 273-4, a psychroactive Siberian permafrost bacterium, reveals mechanisms for adaptation to low-temperature growth.</title>
        <authorList>
            <person name="Ayala-del-Rio H.L."/>
            <person name="Chain P.S."/>
            <person name="Grzymski J.J."/>
            <person name="Ponder M.A."/>
            <person name="Ivanova N."/>
            <person name="Bergholz P.W."/>
            <person name="Di Bartolo G."/>
            <person name="Hauser L."/>
            <person name="Land M."/>
            <person name="Bakermans C."/>
            <person name="Rodrigues D."/>
            <person name="Klappenbach J."/>
            <person name="Zarka D."/>
            <person name="Larimer F."/>
            <person name="Richardson P."/>
            <person name="Murray A."/>
            <person name="Thomashow M."/>
            <person name="Tiedje J.M."/>
        </authorList>
    </citation>
    <scope>NUCLEOTIDE SEQUENCE [LARGE SCALE GENOMIC DNA]</scope>
    <source>
        <strain>DSM 17307 / VKM B-2377 / 273-4</strain>
    </source>
</reference>
<name>MIAB_PSYA2</name>
<protein>
    <recommendedName>
        <fullName evidence="1">tRNA-2-methylthio-N(6)-dimethylallyladenosine synthase</fullName>
        <ecNumber evidence="1">2.8.4.3</ecNumber>
    </recommendedName>
    <alternativeName>
        <fullName evidence="1">(Dimethylallyl)adenosine tRNA methylthiotransferase MiaB</fullName>
    </alternativeName>
    <alternativeName>
        <fullName evidence="1">tRNA-i(6)A37 methylthiotransferase</fullName>
    </alternativeName>
</protein>
<accession>Q4FQU4</accession>
<gene>
    <name evidence="1" type="primary">miaB</name>
    <name type="ordered locus">Psyc_1766</name>
</gene>
<keyword id="KW-0004">4Fe-4S</keyword>
<keyword id="KW-0963">Cytoplasm</keyword>
<keyword id="KW-0408">Iron</keyword>
<keyword id="KW-0411">Iron-sulfur</keyword>
<keyword id="KW-0479">Metal-binding</keyword>
<keyword id="KW-1185">Reference proteome</keyword>
<keyword id="KW-0949">S-adenosyl-L-methionine</keyword>
<keyword id="KW-0808">Transferase</keyword>
<keyword id="KW-0819">tRNA processing</keyword>
<comment type="function">
    <text evidence="1">Catalyzes the methylthiolation of N6-(dimethylallyl)adenosine (i(6)A), leading to the formation of 2-methylthio-N6-(dimethylallyl)adenosine (ms(2)i(6)A) at position 37 in tRNAs that read codons beginning with uridine.</text>
</comment>
<comment type="catalytic activity">
    <reaction evidence="1">
        <text>N(6)-dimethylallyladenosine(37) in tRNA + (sulfur carrier)-SH + AH2 + 2 S-adenosyl-L-methionine = 2-methylsulfanyl-N(6)-dimethylallyladenosine(37) in tRNA + (sulfur carrier)-H + 5'-deoxyadenosine + L-methionine + A + S-adenosyl-L-homocysteine + 2 H(+)</text>
        <dbReference type="Rhea" id="RHEA:37067"/>
        <dbReference type="Rhea" id="RHEA-COMP:10375"/>
        <dbReference type="Rhea" id="RHEA-COMP:10376"/>
        <dbReference type="Rhea" id="RHEA-COMP:14737"/>
        <dbReference type="Rhea" id="RHEA-COMP:14739"/>
        <dbReference type="ChEBI" id="CHEBI:13193"/>
        <dbReference type="ChEBI" id="CHEBI:15378"/>
        <dbReference type="ChEBI" id="CHEBI:17319"/>
        <dbReference type="ChEBI" id="CHEBI:17499"/>
        <dbReference type="ChEBI" id="CHEBI:29917"/>
        <dbReference type="ChEBI" id="CHEBI:57844"/>
        <dbReference type="ChEBI" id="CHEBI:57856"/>
        <dbReference type="ChEBI" id="CHEBI:59789"/>
        <dbReference type="ChEBI" id="CHEBI:64428"/>
        <dbReference type="ChEBI" id="CHEBI:74415"/>
        <dbReference type="ChEBI" id="CHEBI:74417"/>
        <dbReference type="EC" id="2.8.4.3"/>
    </reaction>
</comment>
<comment type="cofactor">
    <cofactor evidence="1">
        <name>[4Fe-4S] cluster</name>
        <dbReference type="ChEBI" id="CHEBI:49883"/>
    </cofactor>
    <text evidence="1">Binds 2 [4Fe-4S] clusters. One cluster is coordinated with 3 cysteines and an exchangeable S-adenosyl-L-methionine.</text>
</comment>
<comment type="subunit">
    <text evidence="1">Monomer.</text>
</comment>
<comment type="subcellular location">
    <subcellularLocation>
        <location evidence="1">Cytoplasm</location>
    </subcellularLocation>
</comment>
<comment type="similarity">
    <text evidence="1">Belongs to the methylthiotransferase family. MiaB subfamily.</text>
</comment>
<dbReference type="EC" id="2.8.4.3" evidence="1"/>
<dbReference type="EMBL" id="CP000082">
    <property type="protein sequence ID" value="AAZ19614.1"/>
    <property type="molecule type" value="Genomic_DNA"/>
</dbReference>
<dbReference type="RefSeq" id="WP_011281026.1">
    <property type="nucleotide sequence ID" value="NC_007204.1"/>
</dbReference>
<dbReference type="SMR" id="Q4FQU4"/>
<dbReference type="STRING" id="259536.Psyc_1766"/>
<dbReference type="KEGG" id="par:Psyc_1766"/>
<dbReference type="eggNOG" id="COG0621">
    <property type="taxonomic scope" value="Bacteria"/>
</dbReference>
<dbReference type="HOGENOM" id="CLU_018697_2_0_6"/>
<dbReference type="OrthoDB" id="9805215at2"/>
<dbReference type="Proteomes" id="UP000000546">
    <property type="component" value="Chromosome"/>
</dbReference>
<dbReference type="GO" id="GO:0005829">
    <property type="term" value="C:cytosol"/>
    <property type="evidence" value="ECO:0007669"/>
    <property type="project" value="TreeGrafter"/>
</dbReference>
<dbReference type="GO" id="GO:0051539">
    <property type="term" value="F:4 iron, 4 sulfur cluster binding"/>
    <property type="evidence" value="ECO:0007669"/>
    <property type="project" value="UniProtKB-UniRule"/>
</dbReference>
<dbReference type="GO" id="GO:0046872">
    <property type="term" value="F:metal ion binding"/>
    <property type="evidence" value="ECO:0007669"/>
    <property type="project" value="UniProtKB-KW"/>
</dbReference>
<dbReference type="GO" id="GO:0035597">
    <property type="term" value="F:N6-isopentenyladenosine methylthiotransferase activity"/>
    <property type="evidence" value="ECO:0007669"/>
    <property type="project" value="TreeGrafter"/>
</dbReference>
<dbReference type="CDD" id="cd01335">
    <property type="entry name" value="Radical_SAM"/>
    <property type="match status" value="1"/>
</dbReference>
<dbReference type="FunFam" id="3.40.50.12160:FF:000001">
    <property type="entry name" value="tRNA-2-methylthio-N(6)-dimethylallyladenosine synthase"/>
    <property type="match status" value="1"/>
</dbReference>
<dbReference type="FunFam" id="3.80.30.20:FF:000001">
    <property type="entry name" value="tRNA-2-methylthio-N(6)-dimethylallyladenosine synthase 2"/>
    <property type="match status" value="1"/>
</dbReference>
<dbReference type="Gene3D" id="3.40.50.12160">
    <property type="entry name" value="Methylthiotransferase, N-terminal domain"/>
    <property type="match status" value="1"/>
</dbReference>
<dbReference type="Gene3D" id="3.80.30.20">
    <property type="entry name" value="tm_1862 like domain"/>
    <property type="match status" value="1"/>
</dbReference>
<dbReference type="HAMAP" id="MF_01864">
    <property type="entry name" value="tRNA_metthiotr_MiaB"/>
    <property type="match status" value="1"/>
</dbReference>
<dbReference type="InterPro" id="IPR006638">
    <property type="entry name" value="Elp3/MiaA/NifB-like_rSAM"/>
</dbReference>
<dbReference type="InterPro" id="IPR005839">
    <property type="entry name" value="Methylthiotransferase"/>
</dbReference>
<dbReference type="InterPro" id="IPR020612">
    <property type="entry name" value="Methylthiotransferase_CS"/>
</dbReference>
<dbReference type="InterPro" id="IPR013848">
    <property type="entry name" value="Methylthiotransferase_N"/>
</dbReference>
<dbReference type="InterPro" id="IPR038135">
    <property type="entry name" value="Methylthiotransferase_N_sf"/>
</dbReference>
<dbReference type="InterPro" id="IPR006463">
    <property type="entry name" value="MiaB_methiolase"/>
</dbReference>
<dbReference type="InterPro" id="IPR007197">
    <property type="entry name" value="rSAM"/>
</dbReference>
<dbReference type="InterPro" id="IPR023404">
    <property type="entry name" value="rSAM_horseshoe"/>
</dbReference>
<dbReference type="InterPro" id="IPR002792">
    <property type="entry name" value="TRAM_dom"/>
</dbReference>
<dbReference type="NCBIfam" id="TIGR01574">
    <property type="entry name" value="miaB-methiolase"/>
    <property type="match status" value="1"/>
</dbReference>
<dbReference type="NCBIfam" id="TIGR00089">
    <property type="entry name" value="MiaB/RimO family radical SAM methylthiotransferase"/>
    <property type="match status" value="1"/>
</dbReference>
<dbReference type="PANTHER" id="PTHR43020">
    <property type="entry name" value="CDK5 REGULATORY SUBUNIT-ASSOCIATED PROTEIN 1"/>
    <property type="match status" value="1"/>
</dbReference>
<dbReference type="PANTHER" id="PTHR43020:SF2">
    <property type="entry name" value="MITOCHONDRIAL TRNA METHYLTHIOTRANSFERASE CDK5RAP1"/>
    <property type="match status" value="1"/>
</dbReference>
<dbReference type="Pfam" id="PF04055">
    <property type="entry name" value="Radical_SAM"/>
    <property type="match status" value="1"/>
</dbReference>
<dbReference type="Pfam" id="PF01938">
    <property type="entry name" value="TRAM"/>
    <property type="match status" value="1"/>
</dbReference>
<dbReference type="Pfam" id="PF00919">
    <property type="entry name" value="UPF0004"/>
    <property type="match status" value="1"/>
</dbReference>
<dbReference type="SFLD" id="SFLDF00273">
    <property type="entry name" value="(dimethylallyl)adenosine_tRNA"/>
    <property type="match status" value="1"/>
</dbReference>
<dbReference type="SFLD" id="SFLDG01082">
    <property type="entry name" value="B12-binding_domain_containing"/>
    <property type="match status" value="1"/>
</dbReference>
<dbReference type="SFLD" id="SFLDG01061">
    <property type="entry name" value="methylthiotransferase"/>
    <property type="match status" value="1"/>
</dbReference>
<dbReference type="SMART" id="SM00729">
    <property type="entry name" value="Elp3"/>
    <property type="match status" value="1"/>
</dbReference>
<dbReference type="SUPFAM" id="SSF102114">
    <property type="entry name" value="Radical SAM enzymes"/>
    <property type="match status" value="1"/>
</dbReference>
<dbReference type="PROSITE" id="PS51449">
    <property type="entry name" value="MTTASE_N"/>
    <property type="match status" value="1"/>
</dbReference>
<dbReference type="PROSITE" id="PS01278">
    <property type="entry name" value="MTTASE_RADICAL"/>
    <property type="match status" value="1"/>
</dbReference>
<dbReference type="PROSITE" id="PS51918">
    <property type="entry name" value="RADICAL_SAM"/>
    <property type="match status" value="1"/>
</dbReference>
<dbReference type="PROSITE" id="PS50926">
    <property type="entry name" value="TRAM"/>
    <property type="match status" value="1"/>
</dbReference>
<feature type="chain" id="PRO_0000374471" description="tRNA-2-methylthio-N(6)-dimethylallyladenosine synthase">
    <location>
        <begin position="1"/>
        <end position="496"/>
    </location>
</feature>
<feature type="domain" description="MTTase N-terminal" evidence="1">
    <location>
        <begin position="43"/>
        <end position="160"/>
    </location>
</feature>
<feature type="domain" description="Radical SAM core" evidence="2">
    <location>
        <begin position="190"/>
        <end position="422"/>
    </location>
</feature>
<feature type="domain" description="TRAM" evidence="1">
    <location>
        <begin position="425"/>
        <end position="493"/>
    </location>
</feature>
<feature type="binding site" evidence="1">
    <location>
        <position position="52"/>
    </location>
    <ligand>
        <name>[4Fe-4S] cluster</name>
        <dbReference type="ChEBI" id="CHEBI:49883"/>
        <label>1</label>
    </ligand>
</feature>
<feature type="binding site" evidence="1">
    <location>
        <position position="89"/>
    </location>
    <ligand>
        <name>[4Fe-4S] cluster</name>
        <dbReference type="ChEBI" id="CHEBI:49883"/>
        <label>1</label>
    </ligand>
</feature>
<feature type="binding site" evidence="1">
    <location>
        <position position="123"/>
    </location>
    <ligand>
        <name>[4Fe-4S] cluster</name>
        <dbReference type="ChEBI" id="CHEBI:49883"/>
        <label>1</label>
    </ligand>
</feature>
<feature type="binding site" evidence="1">
    <location>
        <position position="204"/>
    </location>
    <ligand>
        <name>[4Fe-4S] cluster</name>
        <dbReference type="ChEBI" id="CHEBI:49883"/>
        <label>2</label>
        <note>4Fe-4S-S-AdoMet</note>
    </ligand>
</feature>
<feature type="binding site" evidence="1">
    <location>
        <position position="208"/>
    </location>
    <ligand>
        <name>[4Fe-4S] cluster</name>
        <dbReference type="ChEBI" id="CHEBI:49883"/>
        <label>2</label>
        <note>4Fe-4S-S-AdoMet</note>
    </ligand>
</feature>
<feature type="binding site" evidence="1">
    <location>
        <position position="211"/>
    </location>
    <ligand>
        <name>[4Fe-4S] cluster</name>
        <dbReference type="ChEBI" id="CHEBI:49883"/>
        <label>2</label>
        <note>4Fe-4S-S-AdoMet</note>
    </ligand>
</feature>
<organism>
    <name type="scientific">Psychrobacter arcticus (strain DSM 17307 / VKM B-2377 / 273-4)</name>
    <dbReference type="NCBI Taxonomy" id="259536"/>
    <lineage>
        <taxon>Bacteria</taxon>
        <taxon>Pseudomonadati</taxon>
        <taxon>Pseudomonadota</taxon>
        <taxon>Gammaproteobacteria</taxon>
        <taxon>Moraxellales</taxon>
        <taxon>Moraxellaceae</taxon>
        <taxon>Psychrobacter</taxon>
    </lineage>
</organism>
<proteinExistence type="inferred from homology"/>
<sequence>MSVTVFNPRIDDAAASDITAVTPAVTALNELSSAQAPVKSATKKVFVTTQGCQMNVYDSGKMLDVLGDSHGMEVTHDIDEADVLLMNTCSIREKAQEKVFSELGRWRKLKEKRPDLVIGVGGCVASQEGDNIQKRAPYVDMVFGPQTLHRLPELYDQSHQQREIAPKNRIGTVDVSFPSIEKFDFLPEPRVEGFKAFVSIMEGCSKYCSFCVVPYTRGEELSRPLDDVLAEIDSLAAQGVREINLLGQNVNGYRGEKDDGNICRFAELLHYVSHVDGVERIRYTTSHPLEFTDDIIDAYAQLPELVSHLHLPVQSGSNTILAAMKRNHTIDVYINQINKLKAIRPDIHLSSDFIIGFPGETDQDFQDTLTLAKELNFDHSYSFIYSKRPGTPAAELPDDVSFKTKKERLAEFQKVIIDSTLAKTHEMVGTTTRVLVEQVANRHPDCLIGTADNTRTVMFPYAVDKMDELLGKIVSVRITDFVSPHMVKGEIEAVLA</sequence>
<evidence type="ECO:0000255" key="1">
    <source>
        <dbReference type="HAMAP-Rule" id="MF_01864"/>
    </source>
</evidence>
<evidence type="ECO:0000255" key="2">
    <source>
        <dbReference type="PROSITE-ProRule" id="PRU01266"/>
    </source>
</evidence>